<dbReference type="EC" id="2.3.2.6" evidence="1"/>
<dbReference type="EMBL" id="CP001108">
    <property type="protein sequence ID" value="ACF46698.1"/>
    <property type="molecule type" value="Genomic_DNA"/>
</dbReference>
<dbReference type="RefSeq" id="WP_012506231.1">
    <property type="nucleotide sequence ID" value="NC_011059.1"/>
</dbReference>
<dbReference type="SMR" id="B4S3F9"/>
<dbReference type="STRING" id="290512.Paes_1680"/>
<dbReference type="KEGG" id="paa:Paes_1680"/>
<dbReference type="eggNOG" id="COG2360">
    <property type="taxonomic scope" value="Bacteria"/>
</dbReference>
<dbReference type="HOGENOM" id="CLU_075045_1_1_10"/>
<dbReference type="Proteomes" id="UP000002725">
    <property type="component" value="Chromosome"/>
</dbReference>
<dbReference type="GO" id="GO:0005737">
    <property type="term" value="C:cytoplasm"/>
    <property type="evidence" value="ECO:0007669"/>
    <property type="project" value="UniProtKB-SubCell"/>
</dbReference>
<dbReference type="GO" id="GO:0008914">
    <property type="term" value="F:leucyl-tRNA--protein transferase activity"/>
    <property type="evidence" value="ECO:0007669"/>
    <property type="project" value="UniProtKB-UniRule"/>
</dbReference>
<dbReference type="GO" id="GO:0030163">
    <property type="term" value="P:protein catabolic process"/>
    <property type="evidence" value="ECO:0007669"/>
    <property type="project" value="UniProtKB-UniRule"/>
</dbReference>
<dbReference type="Gene3D" id="3.40.630.70">
    <property type="entry name" value="Leucyl/phenylalanyl-tRNA-protein transferase, C-terminal domain"/>
    <property type="match status" value="1"/>
</dbReference>
<dbReference type="HAMAP" id="MF_00688">
    <property type="entry name" value="Leu_Phe_trans"/>
    <property type="match status" value="1"/>
</dbReference>
<dbReference type="InterPro" id="IPR016181">
    <property type="entry name" value="Acyl_CoA_acyltransferase"/>
</dbReference>
<dbReference type="InterPro" id="IPR004616">
    <property type="entry name" value="Leu/Phe-tRNA_Trfase"/>
</dbReference>
<dbReference type="InterPro" id="IPR042203">
    <property type="entry name" value="Leu/Phe-tRNA_Trfase_C"/>
</dbReference>
<dbReference type="NCBIfam" id="TIGR00667">
    <property type="entry name" value="aat"/>
    <property type="match status" value="1"/>
</dbReference>
<dbReference type="PANTHER" id="PTHR30098">
    <property type="entry name" value="LEUCYL/PHENYLALANYL-TRNA--PROTEIN TRANSFERASE"/>
    <property type="match status" value="1"/>
</dbReference>
<dbReference type="PANTHER" id="PTHR30098:SF2">
    <property type="entry name" value="LEUCYL_PHENYLALANYL-TRNA--PROTEIN TRANSFERASE"/>
    <property type="match status" value="1"/>
</dbReference>
<dbReference type="Pfam" id="PF03588">
    <property type="entry name" value="Leu_Phe_trans"/>
    <property type="match status" value="1"/>
</dbReference>
<dbReference type="SUPFAM" id="SSF55729">
    <property type="entry name" value="Acyl-CoA N-acyltransferases (Nat)"/>
    <property type="match status" value="1"/>
</dbReference>
<accession>B4S3F9</accession>
<sequence>MLNVRDVLRAYLHGYFPMGDPDDGNVYWCRPRRRAVFPLDTYRASRVVRRLVRDNVFDIQINRDFNAVIAHCAKPRRHESETWISDEIVAVYLELHSLGLAHSVECYADGELAGGLYGIALGGAFFGESMFFRQPNASKVAFDALVRQLKLQRFDLLDAQIMNPHLEFLGAVEIDHEEYMRQLAMALEKKISFL</sequence>
<name>LFTR_PROA2</name>
<comment type="function">
    <text evidence="1">Functions in the N-end rule pathway of protein degradation where it conjugates Leu, Phe and, less efficiently, Met from aminoacyl-tRNAs to the N-termini of proteins containing an N-terminal arginine or lysine.</text>
</comment>
<comment type="catalytic activity">
    <reaction evidence="1">
        <text>N-terminal L-lysyl-[protein] + L-leucyl-tRNA(Leu) = N-terminal L-leucyl-L-lysyl-[protein] + tRNA(Leu) + H(+)</text>
        <dbReference type="Rhea" id="RHEA:12340"/>
        <dbReference type="Rhea" id="RHEA-COMP:9613"/>
        <dbReference type="Rhea" id="RHEA-COMP:9622"/>
        <dbReference type="Rhea" id="RHEA-COMP:12670"/>
        <dbReference type="Rhea" id="RHEA-COMP:12671"/>
        <dbReference type="ChEBI" id="CHEBI:15378"/>
        <dbReference type="ChEBI" id="CHEBI:65249"/>
        <dbReference type="ChEBI" id="CHEBI:78442"/>
        <dbReference type="ChEBI" id="CHEBI:78494"/>
        <dbReference type="ChEBI" id="CHEBI:133043"/>
        <dbReference type="EC" id="2.3.2.6"/>
    </reaction>
</comment>
<comment type="catalytic activity">
    <reaction evidence="1">
        <text>N-terminal L-arginyl-[protein] + L-leucyl-tRNA(Leu) = N-terminal L-leucyl-L-arginyl-[protein] + tRNA(Leu) + H(+)</text>
        <dbReference type="Rhea" id="RHEA:50416"/>
        <dbReference type="Rhea" id="RHEA-COMP:9613"/>
        <dbReference type="Rhea" id="RHEA-COMP:9622"/>
        <dbReference type="Rhea" id="RHEA-COMP:12672"/>
        <dbReference type="Rhea" id="RHEA-COMP:12673"/>
        <dbReference type="ChEBI" id="CHEBI:15378"/>
        <dbReference type="ChEBI" id="CHEBI:64719"/>
        <dbReference type="ChEBI" id="CHEBI:78442"/>
        <dbReference type="ChEBI" id="CHEBI:78494"/>
        <dbReference type="ChEBI" id="CHEBI:133044"/>
        <dbReference type="EC" id="2.3.2.6"/>
    </reaction>
</comment>
<comment type="catalytic activity">
    <reaction evidence="1">
        <text>L-phenylalanyl-tRNA(Phe) + an N-terminal L-alpha-aminoacyl-[protein] = an N-terminal L-phenylalanyl-L-alpha-aminoacyl-[protein] + tRNA(Phe)</text>
        <dbReference type="Rhea" id="RHEA:43632"/>
        <dbReference type="Rhea" id="RHEA-COMP:9668"/>
        <dbReference type="Rhea" id="RHEA-COMP:9699"/>
        <dbReference type="Rhea" id="RHEA-COMP:10636"/>
        <dbReference type="Rhea" id="RHEA-COMP:10637"/>
        <dbReference type="ChEBI" id="CHEBI:78442"/>
        <dbReference type="ChEBI" id="CHEBI:78531"/>
        <dbReference type="ChEBI" id="CHEBI:78597"/>
        <dbReference type="ChEBI" id="CHEBI:83561"/>
        <dbReference type="EC" id="2.3.2.6"/>
    </reaction>
</comment>
<comment type="subcellular location">
    <subcellularLocation>
        <location evidence="1">Cytoplasm</location>
    </subcellularLocation>
</comment>
<comment type="similarity">
    <text evidence="1">Belongs to the L/F-transferase family.</text>
</comment>
<reference key="1">
    <citation type="submission" date="2008-06" db="EMBL/GenBank/DDBJ databases">
        <title>Complete sequence of chromosome of Prosthecochloris aestuarii DSM 271.</title>
        <authorList>
            <consortium name="US DOE Joint Genome Institute"/>
            <person name="Lucas S."/>
            <person name="Copeland A."/>
            <person name="Lapidus A."/>
            <person name="Glavina del Rio T."/>
            <person name="Dalin E."/>
            <person name="Tice H."/>
            <person name="Bruce D."/>
            <person name="Goodwin L."/>
            <person name="Pitluck S."/>
            <person name="Schmutz J."/>
            <person name="Larimer F."/>
            <person name="Land M."/>
            <person name="Hauser L."/>
            <person name="Kyrpides N."/>
            <person name="Anderson I."/>
            <person name="Liu Z."/>
            <person name="Li T."/>
            <person name="Zhao F."/>
            <person name="Overmann J."/>
            <person name="Bryant D.A."/>
            <person name="Richardson P."/>
        </authorList>
    </citation>
    <scope>NUCLEOTIDE SEQUENCE [LARGE SCALE GENOMIC DNA]</scope>
    <source>
        <strain>DSM 271 / SK 413</strain>
    </source>
</reference>
<proteinExistence type="inferred from homology"/>
<evidence type="ECO:0000255" key="1">
    <source>
        <dbReference type="HAMAP-Rule" id="MF_00688"/>
    </source>
</evidence>
<feature type="chain" id="PRO_1000131936" description="Leucyl/phenylalanyl-tRNA--protein transferase">
    <location>
        <begin position="1"/>
        <end position="194"/>
    </location>
</feature>
<organism>
    <name type="scientific">Prosthecochloris aestuarii (strain DSM 271 / SK 413)</name>
    <dbReference type="NCBI Taxonomy" id="290512"/>
    <lineage>
        <taxon>Bacteria</taxon>
        <taxon>Pseudomonadati</taxon>
        <taxon>Chlorobiota</taxon>
        <taxon>Chlorobiia</taxon>
        <taxon>Chlorobiales</taxon>
        <taxon>Chlorobiaceae</taxon>
        <taxon>Prosthecochloris</taxon>
    </lineage>
</organism>
<protein>
    <recommendedName>
        <fullName evidence="1">Leucyl/phenylalanyl-tRNA--protein transferase</fullName>
        <ecNumber evidence="1">2.3.2.6</ecNumber>
    </recommendedName>
    <alternativeName>
        <fullName evidence="1">L/F-transferase</fullName>
    </alternativeName>
    <alternativeName>
        <fullName evidence="1">Leucyltransferase</fullName>
    </alternativeName>
    <alternativeName>
        <fullName evidence="1">Phenyalanyltransferase</fullName>
    </alternativeName>
</protein>
<keyword id="KW-0012">Acyltransferase</keyword>
<keyword id="KW-0963">Cytoplasm</keyword>
<keyword id="KW-0808">Transferase</keyword>
<gene>
    <name evidence="1" type="primary">aat</name>
    <name type="ordered locus">Paes_1680</name>
</gene>